<organism>
    <name type="scientific">Lawsonia intracellularis (strain PHE/MN1-00)</name>
    <dbReference type="NCBI Taxonomy" id="363253"/>
    <lineage>
        <taxon>Bacteria</taxon>
        <taxon>Pseudomonadati</taxon>
        <taxon>Thermodesulfobacteriota</taxon>
        <taxon>Desulfovibrionia</taxon>
        <taxon>Desulfovibrionales</taxon>
        <taxon>Desulfovibrionaceae</taxon>
        <taxon>Lawsonia</taxon>
    </lineage>
</organism>
<proteinExistence type="inferred from homology"/>
<protein>
    <recommendedName>
        <fullName evidence="1">Glutamyl-tRNA reductase</fullName>
        <shortName evidence="1">GluTR</shortName>
        <ecNumber evidence="1">1.2.1.70</ecNumber>
    </recommendedName>
</protein>
<name>HEM1_LAWIP</name>
<evidence type="ECO:0000255" key="1">
    <source>
        <dbReference type="HAMAP-Rule" id="MF_00087"/>
    </source>
</evidence>
<evidence type="ECO:0000305" key="2"/>
<sequence>MEQHIYLIGMNHRTASIDVRECFALTEHCSKDDWAIPLIKGIQESLILSTCNRVEILAVGDSNTPEIILSAWAKVKTRSIEELVPHTYTYQGRSAISHLFCVASSLDSMVLGEPQILGQLKDAYKLATIAGASKTILNRLLHKAFSVAKRVRTETSIASNAVSISYAAVKLAKKIFGTMNQYKAMLIGAGEMAELAAMHLMQAGIQQLKIVNRTYSQAQELASQFRGEAIPFEKLVTYLAEVDIVISSTGAPQTIIHFNDIKNILSKRKHYPMLFIDIAVPRDIDPNVHQLDNIYLYDIDDLKEIVEDNIVQRQDEAIKAKHIIQDEIDSFCAWLQALILQPTIVDLRKRFSTYAEEELERTLKKIGPVDRKTREALETMIDALIRKLTHDPISYLKCAHRTIDTNHITLARQMFNLDKIPQTNKAVNED</sequence>
<comment type="function">
    <text evidence="1">Catalyzes the NADPH-dependent reduction of glutamyl-tRNA(Glu) to glutamate 1-semialdehyde (GSA).</text>
</comment>
<comment type="catalytic activity">
    <reaction evidence="1">
        <text>(S)-4-amino-5-oxopentanoate + tRNA(Glu) + NADP(+) = L-glutamyl-tRNA(Glu) + NADPH + H(+)</text>
        <dbReference type="Rhea" id="RHEA:12344"/>
        <dbReference type="Rhea" id="RHEA-COMP:9663"/>
        <dbReference type="Rhea" id="RHEA-COMP:9680"/>
        <dbReference type="ChEBI" id="CHEBI:15378"/>
        <dbReference type="ChEBI" id="CHEBI:57501"/>
        <dbReference type="ChEBI" id="CHEBI:57783"/>
        <dbReference type="ChEBI" id="CHEBI:58349"/>
        <dbReference type="ChEBI" id="CHEBI:78442"/>
        <dbReference type="ChEBI" id="CHEBI:78520"/>
        <dbReference type="EC" id="1.2.1.70"/>
    </reaction>
</comment>
<comment type="pathway">
    <text evidence="1">Porphyrin-containing compound metabolism; protoporphyrin-IX biosynthesis; 5-aminolevulinate from L-glutamyl-tRNA(Glu): step 1/2.</text>
</comment>
<comment type="subunit">
    <text evidence="1">Homodimer.</text>
</comment>
<comment type="domain">
    <text evidence="1">Possesses an unusual extended V-shaped dimeric structure with each monomer consisting of three distinct domains arranged along a curved 'spinal' alpha-helix. The N-terminal catalytic domain specifically recognizes the glutamate moiety of the substrate. The second domain is the NADPH-binding domain, and the third C-terminal domain is responsible for dimerization.</text>
</comment>
<comment type="miscellaneous">
    <text evidence="1">During catalysis, the active site Cys acts as a nucleophile attacking the alpha-carbonyl group of tRNA-bound glutamate with the formation of a thioester intermediate between enzyme and glutamate, and the concomitant release of tRNA(Glu). The thioester intermediate is finally reduced by direct hydride transfer from NADPH, to form the product GSA.</text>
</comment>
<comment type="similarity">
    <text evidence="1">Belongs to the glutamyl-tRNA reductase family.</text>
</comment>
<comment type="sequence caution" evidence="2">
    <conflict type="erroneous initiation">
        <sequence resource="EMBL-CDS" id="CAJ54378"/>
    </conflict>
</comment>
<gene>
    <name evidence="1" type="primary">hemA</name>
    <name type="ordered locus">LI0322</name>
</gene>
<reference key="1">
    <citation type="submission" date="2005-11" db="EMBL/GenBank/DDBJ databases">
        <title>The complete genome sequence of Lawsonia intracellularis: the causative agent of proliferative enteropathy.</title>
        <authorList>
            <person name="Kaur K."/>
            <person name="Zhang Q."/>
            <person name="Beckler D."/>
            <person name="Munir S."/>
            <person name="Li L."/>
            <person name="Kinsley K."/>
            <person name="Herron L."/>
            <person name="Peterson A."/>
            <person name="May B."/>
            <person name="Singh S."/>
            <person name="Gebhart C."/>
            <person name="Kapur V."/>
        </authorList>
    </citation>
    <scope>NUCLEOTIDE SEQUENCE [LARGE SCALE GENOMIC DNA]</scope>
    <source>
        <strain>PHE/MN1-00</strain>
    </source>
</reference>
<keyword id="KW-0521">NADP</keyword>
<keyword id="KW-0560">Oxidoreductase</keyword>
<keyword id="KW-0627">Porphyrin biosynthesis</keyword>
<keyword id="KW-1185">Reference proteome</keyword>
<dbReference type="EC" id="1.2.1.70" evidence="1"/>
<dbReference type="EMBL" id="AM180252">
    <property type="protein sequence ID" value="CAJ54378.1"/>
    <property type="status" value="ALT_INIT"/>
    <property type="molecule type" value="Genomic_DNA"/>
</dbReference>
<dbReference type="RefSeq" id="WP_041817038.1">
    <property type="nucleotide sequence ID" value="NC_008011.1"/>
</dbReference>
<dbReference type="SMR" id="Q1MRJ8"/>
<dbReference type="STRING" id="363253.LI0322"/>
<dbReference type="KEGG" id="lip:LI0322"/>
<dbReference type="eggNOG" id="COG0373">
    <property type="taxonomic scope" value="Bacteria"/>
</dbReference>
<dbReference type="HOGENOM" id="CLU_035113_2_2_7"/>
<dbReference type="OrthoDB" id="110209at2"/>
<dbReference type="UniPathway" id="UPA00251">
    <property type="reaction ID" value="UER00316"/>
</dbReference>
<dbReference type="Proteomes" id="UP000002430">
    <property type="component" value="Chromosome"/>
</dbReference>
<dbReference type="GO" id="GO:0008883">
    <property type="term" value="F:glutamyl-tRNA reductase activity"/>
    <property type="evidence" value="ECO:0007669"/>
    <property type="project" value="UniProtKB-UniRule"/>
</dbReference>
<dbReference type="GO" id="GO:0050661">
    <property type="term" value="F:NADP binding"/>
    <property type="evidence" value="ECO:0007669"/>
    <property type="project" value="InterPro"/>
</dbReference>
<dbReference type="GO" id="GO:0019353">
    <property type="term" value="P:protoporphyrinogen IX biosynthetic process from glutamate"/>
    <property type="evidence" value="ECO:0007669"/>
    <property type="project" value="TreeGrafter"/>
</dbReference>
<dbReference type="CDD" id="cd05213">
    <property type="entry name" value="NAD_bind_Glutamyl_tRNA_reduct"/>
    <property type="match status" value="1"/>
</dbReference>
<dbReference type="FunFam" id="3.30.460.30:FF:000001">
    <property type="entry name" value="Glutamyl-tRNA reductase"/>
    <property type="match status" value="1"/>
</dbReference>
<dbReference type="FunFam" id="3.40.50.720:FF:000031">
    <property type="entry name" value="Glutamyl-tRNA reductase"/>
    <property type="match status" value="1"/>
</dbReference>
<dbReference type="Gene3D" id="3.30.460.30">
    <property type="entry name" value="Glutamyl-tRNA reductase, N-terminal domain"/>
    <property type="match status" value="1"/>
</dbReference>
<dbReference type="Gene3D" id="3.40.50.720">
    <property type="entry name" value="NAD(P)-binding Rossmann-like Domain"/>
    <property type="match status" value="1"/>
</dbReference>
<dbReference type="HAMAP" id="MF_00087">
    <property type="entry name" value="Glu_tRNA_reductase"/>
    <property type="match status" value="1"/>
</dbReference>
<dbReference type="InterPro" id="IPR000343">
    <property type="entry name" value="4pyrrol_synth_GluRdtase"/>
</dbReference>
<dbReference type="InterPro" id="IPR015896">
    <property type="entry name" value="4pyrrol_synth_GluRdtase_dimer"/>
</dbReference>
<dbReference type="InterPro" id="IPR015895">
    <property type="entry name" value="4pyrrol_synth_GluRdtase_N"/>
</dbReference>
<dbReference type="InterPro" id="IPR018214">
    <property type="entry name" value="GluRdtase_CS"/>
</dbReference>
<dbReference type="InterPro" id="IPR036453">
    <property type="entry name" value="GluRdtase_dimer_dom_sf"/>
</dbReference>
<dbReference type="InterPro" id="IPR036343">
    <property type="entry name" value="GluRdtase_N_sf"/>
</dbReference>
<dbReference type="InterPro" id="IPR036291">
    <property type="entry name" value="NAD(P)-bd_dom_sf"/>
</dbReference>
<dbReference type="InterPro" id="IPR006151">
    <property type="entry name" value="Shikm_DH/Glu-tRNA_Rdtase"/>
</dbReference>
<dbReference type="NCBIfam" id="TIGR01035">
    <property type="entry name" value="hemA"/>
    <property type="match status" value="1"/>
</dbReference>
<dbReference type="PANTHER" id="PTHR43013">
    <property type="entry name" value="GLUTAMYL-TRNA REDUCTASE"/>
    <property type="match status" value="1"/>
</dbReference>
<dbReference type="PANTHER" id="PTHR43013:SF1">
    <property type="entry name" value="GLUTAMYL-TRNA REDUCTASE"/>
    <property type="match status" value="1"/>
</dbReference>
<dbReference type="Pfam" id="PF00745">
    <property type="entry name" value="GlutR_dimer"/>
    <property type="match status" value="1"/>
</dbReference>
<dbReference type="Pfam" id="PF05201">
    <property type="entry name" value="GlutR_N"/>
    <property type="match status" value="1"/>
</dbReference>
<dbReference type="Pfam" id="PF01488">
    <property type="entry name" value="Shikimate_DH"/>
    <property type="match status" value="1"/>
</dbReference>
<dbReference type="PIRSF" id="PIRSF000445">
    <property type="entry name" value="4pyrrol_synth_GluRdtase"/>
    <property type="match status" value="1"/>
</dbReference>
<dbReference type="SUPFAM" id="SSF69742">
    <property type="entry name" value="Glutamyl tRNA-reductase catalytic, N-terminal domain"/>
    <property type="match status" value="1"/>
</dbReference>
<dbReference type="SUPFAM" id="SSF69075">
    <property type="entry name" value="Glutamyl tRNA-reductase dimerization domain"/>
    <property type="match status" value="1"/>
</dbReference>
<dbReference type="SUPFAM" id="SSF51735">
    <property type="entry name" value="NAD(P)-binding Rossmann-fold domains"/>
    <property type="match status" value="1"/>
</dbReference>
<dbReference type="PROSITE" id="PS00747">
    <property type="entry name" value="GLUTR"/>
    <property type="match status" value="1"/>
</dbReference>
<feature type="chain" id="PRO_0000335048" description="Glutamyl-tRNA reductase">
    <location>
        <begin position="1"/>
        <end position="430"/>
    </location>
</feature>
<feature type="active site" description="Nucleophile" evidence="1">
    <location>
        <position position="51"/>
    </location>
</feature>
<feature type="binding site" evidence="1">
    <location>
        <begin position="50"/>
        <end position="53"/>
    </location>
    <ligand>
        <name>substrate</name>
    </ligand>
</feature>
<feature type="binding site" evidence="1">
    <location>
        <position position="108"/>
    </location>
    <ligand>
        <name>substrate</name>
    </ligand>
</feature>
<feature type="binding site" evidence="1">
    <location>
        <begin position="113"/>
        <end position="115"/>
    </location>
    <ligand>
        <name>substrate</name>
    </ligand>
</feature>
<feature type="binding site" evidence="1">
    <location>
        <position position="119"/>
    </location>
    <ligand>
        <name>substrate</name>
    </ligand>
</feature>
<feature type="binding site" evidence="1">
    <location>
        <begin position="188"/>
        <end position="193"/>
    </location>
    <ligand>
        <name>NADP(+)</name>
        <dbReference type="ChEBI" id="CHEBI:58349"/>
    </ligand>
</feature>
<feature type="site" description="Important for activity" evidence="1">
    <location>
        <position position="98"/>
    </location>
</feature>
<accession>Q1MRJ8</accession>